<name>ATRF1_STAAW</name>
<reference key="1">
    <citation type="journal article" date="2002" name="Lancet">
        <title>Genome and virulence determinants of high virulence community-acquired MRSA.</title>
        <authorList>
            <person name="Baba T."/>
            <person name="Takeuchi F."/>
            <person name="Kuroda M."/>
            <person name="Yuzawa H."/>
            <person name="Aoki K."/>
            <person name="Oguchi A."/>
            <person name="Nagai Y."/>
            <person name="Iwama N."/>
            <person name="Asano K."/>
            <person name="Naimi T."/>
            <person name="Kuroda H."/>
            <person name="Cui L."/>
            <person name="Yamamoto K."/>
            <person name="Hiramatsu K."/>
        </authorList>
    </citation>
    <scope>NUCLEOTIDE SEQUENCE [LARGE SCALE GENOMIC DNA]</scope>
    <source>
        <strain>MW2</strain>
    </source>
</reference>
<feature type="chain" id="PRO_0000068750" description="Putative acetyltransferase MW0724">
    <location>
        <begin position="1"/>
        <end position="161"/>
    </location>
</feature>
<proteinExistence type="inferred from homology"/>
<sequence length="161" mass="18186">MRKFLSKTHHHTNPLWRVYRLVKFSKVFKNVIIIEFSKFIPSMVLKRHIYKQLLNINIGNQSSIAYKVMLDIFYPELITIGSNSVIGYNVTILTHEALVDEFRYGPVTIGSNTLIGANATILPGITIGDNVKVAAGTVVSKDIPDNGFAYGNPMYIKMIRR</sequence>
<dbReference type="EC" id="2.3.1.-"/>
<dbReference type="EMBL" id="BA000033">
    <property type="protein sequence ID" value="BAB94589.1"/>
    <property type="molecule type" value="Genomic_DNA"/>
</dbReference>
<dbReference type="RefSeq" id="WP_001224793.1">
    <property type="nucleotide sequence ID" value="NC_003923.1"/>
</dbReference>
<dbReference type="SMR" id="Q7A1G0"/>
<dbReference type="KEGG" id="sam:MW0724"/>
<dbReference type="HOGENOM" id="CLU_051638_16_1_9"/>
<dbReference type="GO" id="GO:0016746">
    <property type="term" value="F:acyltransferase activity"/>
    <property type="evidence" value="ECO:0007669"/>
    <property type="project" value="UniProtKB-KW"/>
</dbReference>
<dbReference type="Gene3D" id="2.160.10.10">
    <property type="entry name" value="Hexapeptide repeat proteins"/>
    <property type="match status" value="1"/>
</dbReference>
<dbReference type="InterPro" id="IPR001451">
    <property type="entry name" value="Hexapep"/>
</dbReference>
<dbReference type="InterPro" id="IPR018357">
    <property type="entry name" value="Hexapep_transf_CS"/>
</dbReference>
<dbReference type="InterPro" id="IPR051159">
    <property type="entry name" value="Hexapeptide_acetyltransf"/>
</dbReference>
<dbReference type="InterPro" id="IPR011004">
    <property type="entry name" value="Trimer_LpxA-like_sf"/>
</dbReference>
<dbReference type="PANTHER" id="PTHR23416">
    <property type="entry name" value="SIALIC ACID SYNTHASE-RELATED"/>
    <property type="match status" value="1"/>
</dbReference>
<dbReference type="Pfam" id="PF14602">
    <property type="entry name" value="Hexapep_2"/>
    <property type="match status" value="1"/>
</dbReference>
<dbReference type="SUPFAM" id="SSF51161">
    <property type="entry name" value="Trimeric LpxA-like enzymes"/>
    <property type="match status" value="1"/>
</dbReference>
<dbReference type="PROSITE" id="PS00101">
    <property type="entry name" value="HEXAPEP_TRANSFERASES"/>
    <property type="match status" value="1"/>
</dbReference>
<comment type="similarity">
    <text evidence="1">Belongs to the transferase hexapeptide repeat family.</text>
</comment>
<keyword id="KW-0012">Acyltransferase</keyword>
<keyword id="KW-0677">Repeat</keyword>
<keyword id="KW-0808">Transferase</keyword>
<gene>
    <name type="ordered locus">MW0724</name>
</gene>
<organism>
    <name type="scientific">Staphylococcus aureus (strain MW2)</name>
    <dbReference type="NCBI Taxonomy" id="196620"/>
    <lineage>
        <taxon>Bacteria</taxon>
        <taxon>Bacillati</taxon>
        <taxon>Bacillota</taxon>
        <taxon>Bacilli</taxon>
        <taxon>Bacillales</taxon>
        <taxon>Staphylococcaceae</taxon>
        <taxon>Staphylococcus</taxon>
    </lineage>
</organism>
<evidence type="ECO:0000305" key="1"/>
<accession>Q7A1G0</accession>
<protein>
    <recommendedName>
        <fullName>Putative acetyltransferase MW0724</fullName>
        <ecNumber>2.3.1.-</ecNumber>
    </recommendedName>
</protein>